<gene>
    <name type="primary">AERO1</name>
    <name type="synonym">ERO1</name>
    <name type="ordered locus">At1g72280</name>
    <name type="ORF">T9N14.18</name>
</gene>
<keyword id="KW-1015">Disulfide bond</keyword>
<keyword id="KW-0249">Electron transport</keyword>
<keyword id="KW-0256">Endoplasmic reticulum</keyword>
<keyword id="KW-0274">FAD</keyword>
<keyword id="KW-0285">Flavoprotein</keyword>
<keyword id="KW-0325">Glycoprotein</keyword>
<keyword id="KW-0472">Membrane</keyword>
<keyword id="KW-0560">Oxidoreductase</keyword>
<keyword id="KW-0676">Redox-active center</keyword>
<keyword id="KW-1185">Reference proteome</keyword>
<keyword id="KW-0732">Signal</keyword>
<keyword id="KW-0813">Transport</keyword>
<protein>
    <recommendedName>
        <fullName>Endoplasmic reticulum oxidoreductin-1</fullName>
        <ecNumber>1.8.4.-</ecNumber>
    </recommendedName>
</protein>
<accession>Q9C7S7</accession>
<dbReference type="EC" id="1.8.4.-"/>
<dbReference type="EMBL" id="AC067754">
    <property type="protein sequence ID" value="AAG51798.1"/>
    <property type="molecule type" value="Genomic_DNA"/>
</dbReference>
<dbReference type="EMBL" id="CP002684">
    <property type="protein sequence ID" value="AEE35298.1"/>
    <property type="molecule type" value="Genomic_DNA"/>
</dbReference>
<dbReference type="EMBL" id="BT008774">
    <property type="protein sequence ID" value="AAP68213.1"/>
    <property type="molecule type" value="mRNA"/>
</dbReference>
<dbReference type="PIR" id="E96746">
    <property type="entry name" value="E96746"/>
</dbReference>
<dbReference type="RefSeq" id="NP_177372.1">
    <property type="nucleotide sequence ID" value="NM_105887.4"/>
</dbReference>
<dbReference type="SMR" id="Q9C7S7"/>
<dbReference type="BioGRID" id="28780">
    <property type="interactions" value="1"/>
</dbReference>
<dbReference type="FunCoup" id="Q9C7S7">
    <property type="interactions" value="3551"/>
</dbReference>
<dbReference type="STRING" id="3702.Q9C7S7"/>
<dbReference type="GlyCosmos" id="Q9C7S7">
    <property type="glycosylation" value="1 site, No reported glycans"/>
</dbReference>
<dbReference type="GlyGen" id="Q9C7S7">
    <property type="glycosylation" value="1 site"/>
</dbReference>
<dbReference type="iPTMnet" id="Q9C7S7"/>
<dbReference type="PaxDb" id="3702-AT1G72280.1"/>
<dbReference type="ProteomicsDB" id="220641"/>
<dbReference type="EnsemblPlants" id="AT1G72280.1">
    <property type="protein sequence ID" value="AT1G72280.1"/>
    <property type="gene ID" value="AT1G72280"/>
</dbReference>
<dbReference type="GeneID" id="843560"/>
<dbReference type="Gramene" id="AT1G72280.1">
    <property type="protein sequence ID" value="AT1G72280.1"/>
    <property type="gene ID" value="AT1G72280"/>
</dbReference>
<dbReference type="KEGG" id="ath:AT1G72280"/>
<dbReference type="Araport" id="AT1G72280"/>
<dbReference type="TAIR" id="AT1G72280">
    <property type="gene designation" value="ERO1"/>
</dbReference>
<dbReference type="eggNOG" id="KOG2608">
    <property type="taxonomic scope" value="Eukaryota"/>
</dbReference>
<dbReference type="HOGENOM" id="CLU_023061_2_1_1"/>
<dbReference type="InParanoid" id="Q9C7S7"/>
<dbReference type="OMA" id="CYKDRLH"/>
<dbReference type="OrthoDB" id="269384at2759"/>
<dbReference type="PhylomeDB" id="Q9C7S7"/>
<dbReference type="PRO" id="PR:Q9C7S7"/>
<dbReference type="Proteomes" id="UP000006548">
    <property type="component" value="Chromosome 1"/>
</dbReference>
<dbReference type="ExpressionAtlas" id="Q9C7S7">
    <property type="expression patterns" value="baseline and differential"/>
</dbReference>
<dbReference type="GO" id="GO:0005783">
    <property type="term" value="C:endoplasmic reticulum"/>
    <property type="evidence" value="ECO:0000314"/>
    <property type="project" value="TAIR"/>
</dbReference>
<dbReference type="GO" id="GO:0005789">
    <property type="term" value="C:endoplasmic reticulum membrane"/>
    <property type="evidence" value="ECO:0007669"/>
    <property type="project" value="UniProtKB-SubCell"/>
</dbReference>
<dbReference type="GO" id="GO:0071949">
    <property type="term" value="F:FAD binding"/>
    <property type="evidence" value="ECO:0007669"/>
    <property type="project" value="InterPro"/>
</dbReference>
<dbReference type="GO" id="GO:0015035">
    <property type="term" value="F:protein-disulfide reductase activity"/>
    <property type="evidence" value="ECO:0000314"/>
    <property type="project" value="TAIR"/>
</dbReference>
<dbReference type="GO" id="GO:0016972">
    <property type="term" value="F:thiol oxidase activity"/>
    <property type="evidence" value="ECO:0007669"/>
    <property type="project" value="InterPro"/>
</dbReference>
<dbReference type="GO" id="GO:0034975">
    <property type="term" value="P:protein folding in endoplasmic reticulum"/>
    <property type="evidence" value="ECO:0000314"/>
    <property type="project" value="TAIR"/>
</dbReference>
<dbReference type="InterPro" id="IPR007266">
    <property type="entry name" value="Ero1"/>
</dbReference>
<dbReference type="InterPro" id="IPR037192">
    <property type="entry name" value="ERO1-like_sf"/>
</dbReference>
<dbReference type="PANTHER" id="PTHR12613:SF8">
    <property type="entry name" value="ENDOPLASMIC RETICULUM OXIDOREDUCTIN-1"/>
    <property type="match status" value="1"/>
</dbReference>
<dbReference type="PANTHER" id="PTHR12613">
    <property type="entry name" value="ERO1-RELATED"/>
    <property type="match status" value="1"/>
</dbReference>
<dbReference type="Pfam" id="PF04137">
    <property type="entry name" value="ERO1"/>
    <property type="match status" value="1"/>
</dbReference>
<dbReference type="PIRSF" id="PIRSF017205">
    <property type="entry name" value="ERO1"/>
    <property type="match status" value="1"/>
</dbReference>
<dbReference type="SUPFAM" id="SSF110019">
    <property type="entry name" value="ERO1-like"/>
    <property type="match status" value="1"/>
</dbReference>
<name>ERO1_ARATH</name>
<proteinExistence type="evidence at protein level"/>
<reference key="1">
    <citation type="journal article" date="2003" name="Antioxid. Redox Signal.">
        <title>Cloning and initial characterization of the Arabidopsis thaliana endoplasmic reticulum oxidoreductins.</title>
        <authorList>
            <person name="Dixon D.P."/>
            <person name="Van Lith M."/>
            <person name="Edwards R."/>
            <person name="Benham A."/>
        </authorList>
    </citation>
    <scope>NUCLEOTIDE SEQUENCE [MRNA]</scope>
    <scope>SUBCELLULAR LOCATION</scope>
    <scope>GLYCOSYLATION</scope>
    <source>
        <tissue>Cultured root</tissue>
    </source>
</reference>
<reference key="2">
    <citation type="journal article" date="2000" name="Nature">
        <title>Sequence and analysis of chromosome 1 of the plant Arabidopsis thaliana.</title>
        <authorList>
            <person name="Theologis A."/>
            <person name="Ecker J.R."/>
            <person name="Palm C.J."/>
            <person name="Federspiel N.A."/>
            <person name="Kaul S."/>
            <person name="White O."/>
            <person name="Alonso J."/>
            <person name="Altafi H."/>
            <person name="Araujo R."/>
            <person name="Bowman C.L."/>
            <person name="Brooks S.Y."/>
            <person name="Buehler E."/>
            <person name="Chan A."/>
            <person name="Chao Q."/>
            <person name="Chen H."/>
            <person name="Cheuk R.F."/>
            <person name="Chin C.W."/>
            <person name="Chung M.K."/>
            <person name="Conn L."/>
            <person name="Conway A.B."/>
            <person name="Conway A.R."/>
            <person name="Creasy T.H."/>
            <person name="Dewar K."/>
            <person name="Dunn P."/>
            <person name="Etgu P."/>
            <person name="Feldblyum T.V."/>
            <person name="Feng J.-D."/>
            <person name="Fong B."/>
            <person name="Fujii C.Y."/>
            <person name="Gill J.E."/>
            <person name="Goldsmith A.D."/>
            <person name="Haas B."/>
            <person name="Hansen N.F."/>
            <person name="Hughes B."/>
            <person name="Huizar L."/>
            <person name="Hunter J.L."/>
            <person name="Jenkins J."/>
            <person name="Johnson-Hopson C."/>
            <person name="Khan S."/>
            <person name="Khaykin E."/>
            <person name="Kim C.J."/>
            <person name="Koo H.L."/>
            <person name="Kremenetskaia I."/>
            <person name="Kurtz D.B."/>
            <person name="Kwan A."/>
            <person name="Lam B."/>
            <person name="Langin-Hooper S."/>
            <person name="Lee A."/>
            <person name="Lee J.M."/>
            <person name="Lenz C.A."/>
            <person name="Li J.H."/>
            <person name="Li Y.-P."/>
            <person name="Lin X."/>
            <person name="Liu S.X."/>
            <person name="Liu Z.A."/>
            <person name="Luros J.S."/>
            <person name="Maiti R."/>
            <person name="Marziali A."/>
            <person name="Militscher J."/>
            <person name="Miranda M."/>
            <person name="Nguyen M."/>
            <person name="Nierman W.C."/>
            <person name="Osborne B.I."/>
            <person name="Pai G."/>
            <person name="Peterson J."/>
            <person name="Pham P.K."/>
            <person name="Rizzo M."/>
            <person name="Rooney T."/>
            <person name="Rowley D."/>
            <person name="Sakano H."/>
            <person name="Salzberg S.L."/>
            <person name="Schwartz J.R."/>
            <person name="Shinn P."/>
            <person name="Southwick A.M."/>
            <person name="Sun H."/>
            <person name="Tallon L.J."/>
            <person name="Tambunga G."/>
            <person name="Toriumi M.J."/>
            <person name="Town C.D."/>
            <person name="Utterback T."/>
            <person name="Van Aken S."/>
            <person name="Vaysberg M."/>
            <person name="Vysotskaia V.S."/>
            <person name="Walker M."/>
            <person name="Wu D."/>
            <person name="Yu G."/>
            <person name="Fraser C.M."/>
            <person name="Venter J.C."/>
            <person name="Davis R.W."/>
        </authorList>
    </citation>
    <scope>NUCLEOTIDE SEQUENCE [LARGE SCALE GENOMIC DNA]</scope>
    <source>
        <strain>cv. Columbia</strain>
    </source>
</reference>
<reference key="3">
    <citation type="journal article" date="2017" name="Plant J.">
        <title>Araport11: a complete reannotation of the Arabidopsis thaliana reference genome.</title>
        <authorList>
            <person name="Cheng C.Y."/>
            <person name="Krishnakumar V."/>
            <person name="Chan A.P."/>
            <person name="Thibaud-Nissen F."/>
            <person name="Schobel S."/>
            <person name="Town C.D."/>
        </authorList>
    </citation>
    <scope>GENOME REANNOTATION</scope>
    <source>
        <strain>cv. Columbia</strain>
    </source>
</reference>
<reference key="4">
    <citation type="journal article" date="2003" name="Science">
        <title>Empirical analysis of transcriptional activity in the Arabidopsis genome.</title>
        <authorList>
            <person name="Yamada K."/>
            <person name="Lim J."/>
            <person name="Dale J.M."/>
            <person name="Chen H."/>
            <person name="Shinn P."/>
            <person name="Palm C.J."/>
            <person name="Southwick A.M."/>
            <person name="Wu H.C."/>
            <person name="Kim C.J."/>
            <person name="Nguyen M."/>
            <person name="Pham P.K."/>
            <person name="Cheuk R.F."/>
            <person name="Karlin-Newmann G."/>
            <person name="Liu S.X."/>
            <person name="Lam B."/>
            <person name="Sakano H."/>
            <person name="Wu T."/>
            <person name="Yu G."/>
            <person name="Miranda M."/>
            <person name="Quach H.L."/>
            <person name="Tripp M."/>
            <person name="Chang C.H."/>
            <person name="Lee J.M."/>
            <person name="Toriumi M.J."/>
            <person name="Chan M.M."/>
            <person name="Tang C.C."/>
            <person name="Onodera C.S."/>
            <person name="Deng J.M."/>
            <person name="Akiyama K."/>
            <person name="Ansari Y."/>
            <person name="Arakawa T."/>
            <person name="Banh J."/>
            <person name="Banno F."/>
            <person name="Bowser L."/>
            <person name="Brooks S.Y."/>
            <person name="Carninci P."/>
            <person name="Chao Q."/>
            <person name="Choy N."/>
            <person name="Enju A."/>
            <person name="Goldsmith A.D."/>
            <person name="Gurjal M."/>
            <person name="Hansen N.F."/>
            <person name="Hayashizaki Y."/>
            <person name="Johnson-Hopson C."/>
            <person name="Hsuan V.W."/>
            <person name="Iida K."/>
            <person name="Karnes M."/>
            <person name="Khan S."/>
            <person name="Koesema E."/>
            <person name="Ishida J."/>
            <person name="Jiang P.X."/>
            <person name="Jones T."/>
            <person name="Kawai J."/>
            <person name="Kamiya A."/>
            <person name="Meyers C."/>
            <person name="Nakajima M."/>
            <person name="Narusaka M."/>
            <person name="Seki M."/>
            <person name="Sakurai T."/>
            <person name="Satou M."/>
            <person name="Tamse R."/>
            <person name="Vaysberg M."/>
            <person name="Wallender E.K."/>
            <person name="Wong C."/>
            <person name="Yamamura Y."/>
            <person name="Yuan S."/>
            <person name="Shinozaki K."/>
            <person name="Davis R.W."/>
            <person name="Theologis A."/>
            <person name="Ecker J.R."/>
        </authorList>
    </citation>
    <scope>NUCLEOTIDE SEQUENCE [LARGE SCALE MRNA]</scope>
    <source>
        <strain>cv. Columbia</strain>
    </source>
</reference>
<comment type="function">
    <text evidence="1">Essential oxidoreductase that oxidizes proteins in the endoplasmic reticulum to produce disulfide bonds. Acts by oxidizing directly PDI isomerase through a direct disulfide exchange. Does not act as a direct oxidant of folding substrate, but relies on PDI to transfer oxidizing equivalent. Does not oxidize all PDI related proteins, suggesting that it can discriminate between PDI and related proteins. Its reoxidation probably involves electron transfer to molecular oxygen via FAD. Acts independently of glutathione. May be responsible for a significant proportion of reactive oxygen species (ROS) in the cell, thereby being a source of oxidative stress (By similarity).</text>
</comment>
<comment type="cofactor">
    <cofactor evidence="2">
        <name>FAD</name>
        <dbReference type="ChEBI" id="CHEBI:57692"/>
    </cofactor>
</comment>
<comment type="subunit">
    <text evidence="1">May function both as a monomer and a homodimer.</text>
</comment>
<comment type="subcellular location">
    <subcellularLocation>
        <location evidence="4">Endoplasmic reticulum membrane</location>
        <topology evidence="4">Peripheral membrane protein</topology>
        <orientation evidence="4">Lumenal side</orientation>
    </subcellularLocation>
</comment>
<comment type="PTM">
    <text evidence="4">N-glycosylated.</text>
</comment>
<comment type="similarity">
    <text evidence="5">Belongs to the EROs family.</text>
</comment>
<organism>
    <name type="scientific">Arabidopsis thaliana</name>
    <name type="common">Mouse-ear cress</name>
    <dbReference type="NCBI Taxonomy" id="3702"/>
    <lineage>
        <taxon>Eukaryota</taxon>
        <taxon>Viridiplantae</taxon>
        <taxon>Streptophyta</taxon>
        <taxon>Embryophyta</taxon>
        <taxon>Tracheophyta</taxon>
        <taxon>Spermatophyta</taxon>
        <taxon>Magnoliopsida</taxon>
        <taxon>eudicotyledons</taxon>
        <taxon>Gunneridae</taxon>
        <taxon>Pentapetalae</taxon>
        <taxon>rosids</taxon>
        <taxon>malvids</taxon>
        <taxon>Brassicales</taxon>
        <taxon>Brassicaceae</taxon>
        <taxon>Camelineae</taxon>
        <taxon>Arabidopsis</taxon>
    </lineage>
</organism>
<sequence>MGKGAIKEEESEKKRKTWRWPLATLVVVFLAVAVSSRTNSNVGFFFSDRNSCSCSLQKTGKYKGMIEDCCCDYETVDNLNTEVLNPLLQDLVTTPFFRYYKVKLWCDCPFWPDDGMCRLRDCSVCECPENEFPEPFKKPFVPGLPSDDLKCQEGKPQGAVDRTIDNRAFRGWVETKNPWTHDDDTDSGEMSYVNLQLNPERYTGYTGPSARRIWDSIYSENCPKYSSGETCPEKKVLYKLISGLHSSISMHIAADYLLDESRNQWGQNIELMYDRILRHPDRVRNMYFTYLFVLRAVTKATAYLEQAEYDTGNHAEDLKTQSLIKQLLYSPKLQTACPVPFDEAKLWQGQSGPELKQQIQKQFRNISALMDCVGCEKCRLWGKLQVQGLGTALKILFSVGNQDIGDQTLQLQRNEVIALVNLLNRLSESVKMVHDMSPDVERLMEDQIAKVSAKPARLRRIWDLAVSFW</sequence>
<evidence type="ECO:0000250" key="1"/>
<evidence type="ECO:0000250" key="2">
    <source>
        <dbReference type="UniProtKB" id="Q96HE7"/>
    </source>
</evidence>
<evidence type="ECO:0000255" key="3"/>
<evidence type="ECO:0000269" key="4">
    <source>
    </source>
</evidence>
<evidence type="ECO:0000305" key="5"/>
<feature type="signal peptide" evidence="3">
    <location>
        <begin position="1"/>
        <end position="36"/>
    </location>
</feature>
<feature type="chain" id="PRO_0000008422" description="Endoplasmic reticulum oxidoreductin-1">
    <location>
        <begin position="37"/>
        <end position="469"/>
    </location>
</feature>
<feature type="binding site" evidence="2">
    <location>
        <position position="201"/>
    </location>
    <ligand>
        <name>FAD</name>
        <dbReference type="ChEBI" id="CHEBI:57692"/>
    </ligand>
</feature>
<feature type="binding site" evidence="2">
    <location>
        <position position="203"/>
    </location>
    <ligand>
        <name>FAD</name>
        <dbReference type="ChEBI" id="CHEBI:57692"/>
    </ligand>
</feature>
<feature type="binding site" evidence="2">
    <location>
        <position position="214"/>
    </location>
    <ligand>
        <name>FAD</name>
        <dbReference type="ChEBI" id="CHEBI:57692"/>
    </ligand>
</feature>
<feature type="binding site" evidence="2">
    <location>
        <position position="242"/>
    </location>
    <ligand>
        <name>FAD</name>
        <dbReference type="ChEBI" id="CHEBI:57692"/>
    </ligand>
</feature>
<feature type="binding site" evidence="2">
    <location>
        <position position="245"/>
    </location>
    <ligand>
        <name>FAD</name>
        <dbReference type="ChEBI" id="CHEBI:57692"/>
    </ligand>
</feature>
<feature type="binding site" evidence="2">
    <location>
        <position position="275"/>
    </location>
    <ligand>
        <name>FAD</name>
        <dbReference type="ChEBI" id="CHEBI:57692"/>
    </ligand>
</feature>
<feature type="binding site" evidence="2">
    <location>
        <position position="282"/>
    </location>
    <ligand>
        <name>FAD</name>
        <dbReference type="ChEBI" id="CHEBI:57692"/>
    </ligand>
</feature>
<feature type="glycosylation site" description="N-linked (GlcNAc...) asparagine" evidence="3">
    <location>
        <position position="365"/>
    </location>
</feature>
<feature type="disulfide bond" evidence="2">
    <location>
        <begin position="52"/>
        <end position="71"/>
    </location>
</feature>
<feature type="disulfide bond" evidence="2">
    <location>
        <begin position="54"/>
        <end position="69"/>
    </location>
</feature>
<feature type="disulfide bond" evidence="2">
    <location>
        <begin position="108"/>
        <end position="372"/>
    </location>
</feature>
<feature type="disulfide bond" description="Redox-active" evidence="2">
    <location>
        <begin position="117"/>
        <end position="122"/>
    </location>
</feature>
<feature type="disulfide bond" evidence="2">
    <location>
        <begin position="222"/>
        <end position="231"/>
    </location>
</feature>
<feature type="disulfide bond" description="Redox-active" evidence="2">
    <location>
        <begin position="375"/>
        <end position="378"/>
    </location>
</feature>